<reference evidence="10" key="1">
    <citation type="journal article" date="2000" name="Development">
        <title>The fax-1 nuclear hormone receptor regulates axon pathfinding and neurotransmitter expression.</title>
        <authorList>
            <person name="Much J.W."/>
            <person name="Slade D.J."/>
            <person name="Klampert K."/>
            <person name="Garriga G."/>
            <person name="Wightman B."/>
        </authorList>
    </citation>
    <scope>NUCLEOTIDE SEQUENCE [MRNA]</scope>
    <scope>FUNCTION</scope>
    <scope>SUBCELLULAR LOCATION</scope>
    <scope>DEVELOPMENTAL STAGE</scope>
    <scope>MUTAGENESIS OF 128-ARG--ILE-419</scope>
    <source>
        <strain evidence="10">Bristol N2</strain>
    </source>
</reference>
<reference evidence="11" key="2">
    <citation type="journal article" date="1998" name="Science">
        <title>Genome sequence of the nematode C. elegans: a platform for investigating biology.</title>
        <authorList>
            <consortium name="The C. elegans sequencing consortium"/>
        </authorList>
    </citation>
    <scope>NUCLEOTIDE SEQUENCE [LARGE SCALE GENOMIC DNA]</scope>
    <source>
        <strain evidence="11">Bristol N2</strain>
    </source>
</reference>
<reference evidence="9" key="3">
    <citation type="journal article" date="1997" name="Development">
        <title>Genes that guide growth cones along the C. elegans ventral nerve cord.</title>
        <authorList>
            <person name="Wightman B."/>
            <person name="Baran R."/>
            <person name="Garriga G."/>
        </authorList>
    </citation>
    <scope>FUNCTION</scope>
    <scope>MUTAGENESIS OF 128-ARG--ILE-419</scope>
</reference>
<reference evidence="9" key="4">
    <citation type="journal article" date="2005" name="Dev. Biol.">
        <title>The C. elegans nuclear receptor gene fax-1 and homeobox gene unc-42 coordinate interneuron identity by regulating the expression of glutamate receptor subunits and other neuron-specific genes.</title>
        <authorList>
            <person name="Wightman B."/>
            <person name="Ebert B."/>
            <person name="Carmean N."/>
            <person name="Weber K."/>
            <person name="Clever S."/>
        </authorList>
    </citation>
    <scope>FUNCTION</scope>
    <scope>SUBCELLULAR LOCATION</scope>
    <scope>DEVELOPMENTAL STAGE</scope>
    <scope>MUTAGENESIS OF 128-ARG--ILE-419</scope>
</reference>
<reference evidence="9" key="5">
    <citation type="journal article" date="2008" name="BMC Mol. Biol.">
        <title>Specificity of DNA-binding by the FAX-1 and NHR-67 nuclear receptors of Caenorhabditis elegans is partially mediated via a subclass-specific P-box residue.</title>
        <authorList>
            <person name="DeMeo S.D."/>
            <person name="Lombel R.M."/>
            <person name="Cronin M."/>
            <person name="Smith E.L."/>
            <person name="Snowflack D.R."/>
            <person name="Reinert K."/>
            <person name="Clever S."/>
            <person name="Wightman B."/>
        </authorList>
    </citation>
    <scope>FUNCTION</scope>
</reference>
<reference evidence="9" key="6">
    <citation type="journal article" date="2012" name="BMC Evol. Biol.">
        <title>Analysis of C. elegans NR2E nuclear receptors defines three conserved clades and ligand-independent functions.</title>
        <authorList>
            <person name="Weber K.P."/>
            <person name="Alvaro C.G."/>
            <person name="Baer G.M."/>
            <person name="Reinert K."/>
            <person name="Cheng G."/>
            <person name="Clever S."/>
            <person name="Wightman B."/>
        </authorList>
    </citation>
    <scope>FUNCTION</scope>
    <scope>DOMAIN</scope>
    <scope>MUTAGENESIS OF 128-ARG--ILE-419</scope>
</reference>
<evidence type="ECO:0000255" key="1">
    <source>
        <dbReference type="PROSITE-ProRule" id="PRU00407"/>
    </source>
</evidence>
<evidence type="ECO:0000255" key="2">
    <source>
        <dbReference type="PROSITE-ProRule" id="PRU01189"/>
    </source>
</evidence>
<evidence type="ECO:0000256" key="3">
    <source>
        <dbReference type="SAM" id="MobiDB-lite"/>
    </source>
</evidence>
<evidence type="ECO:0000269" key="4">
    <source>
    </source>
</evidence>
<evidence type="ECO:0000269" key="5">
    <source>
    </source>
</evidence>
<evidence type="ECO:0000269" key="6">
    <source>
    </source>
</evidence>
<evidence type="ECO:0000269" key="7">
    <source>
    </source>
</evidence>
<evidence type="ECO:0000269" key="8">
    <source>
    </source>
</evidence>
<evidence type="ECO:0000305" key="9"/>
<evidence type="ECO:0000312" key="10">
    <source>
        <dbReference type="EMBL" id="AAD55066.1"/>
    </source>
</evidence>
<evidence type="ECO:0000312" key="11">
    <source>
        <dbReference type="Proteomes" id="UP000001940"/>
    </source>
</evidence>
<evidence type="ECO:0000312" key="12">
    <source>
        <dbReference type="WormBase" id="F56E3.4a"/>
    </source>
</evidence>
<evidence type="ECO:0000312" key="13">
    <source>
        <dbReference type="WormBase" id="F56E3.4b"/>
    </source>
</evidence>
<dbReference type="EMBL" id="AF176087">
    <property type="protein sequence ID" value="AAD55066.1"/>
    <property type="molecule type" value="mRNA"/>
</dbReference>
<dbReference type="EMBL" id="BX284606">
    <property type="protein sequence ID" value="CCD64596.1"/>
    <property type="molecule type" value="Genomic_DNA"/>
</dbReference>
<dbReference type="EMBL" id="BX284606">
    <property type="protein sequence ID" value="CCM09421.1"/>
    <property type="molecule type" value="Genomic_DNA"/>
</dbReference>
<dbReference type="RefSeq" id="NP_001263953.1">
    <molecule id="G5EDJ0-2"/>
    <property type="nucleotide sequence ID" value="NM_001277024.2"/>
</dbReference>
<dbReference type="RefSeq" id="NP_508547.1">
    <molecule id="G5EDJ0-1"/>
    <property type="nucleotide sequence ID" value="NM_076146.4"/>
</dbReference>
<dbReference type="SMR" id="G5EDJ0"/>
<dbReference type="FunCoup" id="G5EDJ0">
    <property type="interactions" value="122"/>
</dbReference>
<dbReference type="IntAct" id="G5EDJ0">
    <property type="interactions" value="1"/>
</dbReference>
<dbReference type="STRING" id="6239.F56E3.4a.1"/>
<dbReference type="PaxDb" id="6239-F56E3.4a"/>
<dbReference type="EnsemblMetazoa" id="F56E3.4a.1">
    <molecule id="G5EDJ0-1"/>
    <property type="protein sequence ID" value="F56E3.4a.1"/>
    <property type="gene ID" value="WBGene00001400"/>
</dbReference>
<dbReference type="EnsemblMetazoa" id="F56E3.4b.1">
    <molecule id="G5EDJ0-2"/>
    <property type="protein sequence ID" value="F56E3.4b.1"/>
    <property type="gene ID" value="WBGene00001400"/>
</dbReference>
<dbReference type="GeneID" id="180609"/>
<dbReference type="KEGG" id="cel:CELE_F56E3.4"/>
<dbReference type="AGR" id="WB:WBGene00001400"/>
<dbReference type="CTD" id="180609"/>
<dbReference type="WormBase" id="F56E3.4a">
    <molecule id="G5EDJ0-1"/>
    <property type="protein sequence ID" value="CE28464"/>
    <property type="gene ID" value="WBGene00001400"/>
    <property type="gene designation" value="fax-1"/>
</dbReference>
<dbReference type="WormBase" id="F56E3.4b">
    <molecule id="G5EDJ0-2"/>
    <property type="protein sequence ID" value="CE04670"/>
    <property type="gene ID" value="WBGene00001400"/>
    <property type="gene designation" value="fax-1"/>
</dbReference>
<dbReference type="eggNOG" id="KOG3575">
    <property type="taxonomic scope" value="Eukaryota"/>
</dbReference>
<dbReference type="GeneTree" id="ENSGT00940000156926"/>
<dbReference type="HOGENOM" id="CLU_007368_9_0_1"/>
<dbReference type="InParanoid" id="G5EDJ0"/>
<dbReference type="OMA" id="LDQCICL"/>
<dbReference type="OrthoDB" id="5771769at2759"/>
<dbReference type="PhylomeDB" id="G5EDJ0"/>
<dbReference type="Reactome" id="R-CEL-383280">
    <property type="pathway name" value="Nuclear Receptor transcription pathway"/>
</dbReference>
<dbReference type="PRO" id="PR:G5EDJ0"/>
<dbReference type="Proteomes" id="UP000001940">
    <property type="component" value="Chromosome X"/>
</dbReference>
<dbReference type="Bgee" id="WBGene00001400">
    <property type="expression patterns" value="Expressed in pharyngeal muscle cell (C elegans) and 3 other cell types or tissues"/>
</dbReference>
<dbReference type="ExpressionAtlas" id="G5EDJ0">
    <property type="expression patterns" value="baseline and differential"/>
</dbReference>
<dbReference type="GO" id="GO:0030424">
    <property type="term" value="C:axon"/>
    <property type="evidence" value="ECO:0007669"/>
    <property type="project" value="UniProtKB-SubCell"/>
</dbReference>
<dbReference type="GO" id="GO:0005737">
    <property type="term" value="C:cytoplasm"/>
    <property type="evidence" value="ECO:0007669"/>
    <property type="project" value="UniProtKB-SubCell"/>
</dbReference>
<dbReference type="GO" id="GO:0005634">
    <property type="term" value="C:nucleus"/>
    <property type="evidence" value="ECO:0000314"/>
    <property type="project" value="WormBase"/>
</dbReference>
<dbReference type="GO" id="GO:0003700">
    <property type="term" value="F:DNA-binding transcription factor activity"/>
    <property type="evidence" value="ECO:0000314"/>
    <property type="project" value="WormBase"/>
</dbReference>
<dbReference type="GO" id="GO:0000981">
    <property type="term" value="F:DNA-binding transcription factor activity, RNA polymerase II-specific"/>
    <property type="evidence" value="ECO:0000315"/>
    <property type="project" value="UniProtKB"/>
</dbReference>
<dbReference type="GO" id="GO:0004879">
    <property type="term" value="F:nuclear receptor activity"/>
    <property type="evidence" value="ECO:0000318"/>
    <property type="project" value="GO_Central"/>
</dbReference>
<dbReference type="GO" id="GO:0000978">
    <property type="term" value="F:RNA polymerase II cis-regulatory region sequence-specific DNA binding"/>
    <property type="evidence" value="ECO:0000318"/>
    <property type="project" value="GO_Central"/>
</dbReference>
<dbReference type="GO" id="GO:0043565">
    <property type="term" value="F:sequence-specific DNA binding"/>
    <property type="evidence" value="ECO:0000314"/>
    <property type="project" value="WormBase"/>
</dbReference>
<dbReference type="GO" id="GO:0008270">
    <property type="term" value="F:zinc ion binding"/>
    <property type="evidence" value="ECO:0007669"/>
    <property type="project" value="UniProtKB-KW"/>
</dbReference>
<dbReference type="GO" id="GO:0007411">
    <property type="term" value="P:axon guidance"/>
    <property type="evidence" value="ECO:0000315"/>
    <property type="project" value="UniProtKB"/>
</dbReference>
<dbReference type="GO" id="GO:0007626">
    <property type="term" value="P:locomotory behavior"/>
    <property type="evidence" value="ECO:0000315"/>
    <property type="project" value="WormBase"/>
</dbReference>
<dbReference type="GO" id="GO:0030182">
    <property type="term" value="P:neuron differentiation"/>
    <property type="evidence" value="ECO:0000318"/>
    <property type="project" value="GO_Central"/>
</dbReference>
<dbReference type="GO" id="GO:0048665">
    <property type="term" value="P:neuron fate specification"/>
    <property type="evidence" value="ECO:0000315"/>
    <property type="project" value="WormBase"/>
</dbReference>
<dbReference type="GO" id="GO:0045944">
    <property type="term" value="P:positive regulation of transcription by RNA polymerase II"/>
    <property type="evidence" value="ECO:0000314"/>
    <property type="project" value="WormBase"/>
</dbReference>
<dbReference type="GO" id="GO:0043058">
    <property type="term" value="P:regulation of backward locomotion"/>
    <property type="evidence" value="ECO:0000315"/>
    <property type="project" value="WormBase"/>
</dbReference>
<dbReference type="GO" id="GO:0043059">
    <property type="term" value="P:regulation of forward locomotion"/>
    <property type="evidence" value="ECO:0000315"/>
    <property type="project" value="WormBase"/>
</dbReference>
<dbReference type="GO" id="GO:0006357">
    <property type="term" value="P:regulation of transcription by RNA polymerase II"/>
    <property type="evidence" value="ECO:0000315"/>
    <property type="project" value="UniProtKB"/>
</dbReference>
<dbReference type="CDD" id="cd06970">
    <property type="entry name" value="NR_DBD_PNR"/>
    <property type="match status" value="1"/>
</dbReference>
<dbReference type="FunFam" id="3.30.50.10:FF:000028">
    <property type="entry name" value="Nuclear receptor subfamily 2, group E, member 3"/>
    <property type="match status" value="1"/>
</dbReference>
<dbReference type="Gene3D" id="3.30.50.10">
    <property type="entry name" value="Erythroid Transcription Factor GATA-1, subunit A"/>
    <property type="match status" value="1"/>
</dbReference>
<dbReference type="Gene3D" id="1.10.565.10">
    <property type="entry name" value="Retinoid X Receptor"/>
    <property type="match status" value="1"/>
</dbReference>
<dbReference type="InterPro" id="IPR035500">
    <property type="entry name" value="NHR-like_dom_sf"/>
</dbReference>
<dbReference type="InterPro" id="IPR050274">
    <property type="entry name" value="Nuclear_hormone_rcpt_NR2"/>
</dbReference>
<dbReference type="InterPro" id="IPR001628">
    <property type="entry name" value="Znf_hrmn_rcpt"/>
</dbReference>
<dbReference type="InterPro" id="IPR013088">
    <property type="entry name" value="Znf_NHR/GATA"/>
</dbReference>
<dbReference type="PANTHER" id="PTHR24083">
    <property type="entry name" value="NUCLEAR HORMONE RECEPTOR"/>
    <property type="match status" value="1"/>
</dbReference>
<dbReference type="Pfam" id="PF00105">
    <property type="entry name" value="zf-C4"/>
    <property type="match status" value="1"/>
</dbReference>
<dbReference type="PRINTS" id="PR00047">
    <property type="entry name" value="STROIDFINGER"/>
</dbReference>
<dbReference type="SMART" id="SM00399">
    <property type="entry name" value="ZnF_C4"/>
    <property type="match status" value="1"/>
</dbReference>
<dbReference type="SUPFAM" id="SSF57716">
    <property type="entry name" value="Glucocorticoid receptor-like (DNA-binding domain)"/>
    <property type="match status" value="1"/>
</dbReference>
<dbReference type="SUPFAM" id="SSF48508">
    <property type="entry name" value="Nuclear receptor ligand-binding domain"/>
    <property type="match status" value="1"/>
</dbReference>
<dbReference type="PROSITE" id="PS00031">
    <property type="entry name" value="NUCLEAR_REC_DBD_1"/>
    <property type="match status" value="1"/>
</dbReference>
<dbReference type="PROSITE" id="PS51030">
    <property type="entry name" value="NUCLEAR_REC_DBD_2"/>
    <property type="match status" value="1"/>
</dbReference>
<proteinExistence type="evidence at protein level"/>
<protein>
    <recommendedName>
        <fullName evidence="9">Nuclear hormone receptor family member fax-1</fullName>
    </recommendedName>
</protein>
<feature type="chain" id="PRO_0000452986" description="Nuclear hormone receptor family member fax-1">
    <location>
        <begin position="1"/>
        <end position="419"/>
    </location>
</feature>
<feature type="domain" description="NR LBD" evidence="2">
    <location>
        <begin position="205"/>
        <end position="419"/>
    </location>
</feature>
<feature type="DNA-binding region" description="Nuclear receptor" evidence="1">
    <location>
        <begin position="99"/>
        <end position="175"/>
    </location>
</feature>
<feature type="zinc finger region" description="NR C4-type" evidence="1">
    <location>
        <begin position="102"/>
        <end position="122"/>
    </location>
</feature>
<feature type="zinc finger region" description="NR C4-type" evidence="1">
    <location>
        <begin position="138"/>
        <end position="158"/>
    </location>
</feature>
<feature type="region of interest" description="Disordered" evidence="3">
    <location>
        <begin position="211"/>
        <end position="238"/>
    </location>
</feature>
<feature type="compositionally biased region" description="Basic and acidic residues" evidence="3">
    <location>
        <begin position="226"/>
        <end position="236"/>
    </location>
</feature>
<feature type="splice variant" id="VSP_061076" description="In isoform b." evidence="9">
    <original>RELSLWRAGWDNRASIITVYPAGERGARLVAAALLLAEHSVMGFGNCVIPLALVFSTKSRYVIQRHAI</original>
    <variation>PTEDSQYQFEEQLDQCICLLQQCCLKLDSSPSRFGKLLLLLAEIQFYPTSYLESLLDTKISQLVSRFL</variation>
    <location>
        <begin position="323"/>
        <end position="390"/>
    </location>
</feature>
<feature type="splice variant" id="VSP_061077" description="In isoform b." evidence="9">
    <location>
        <begin position="391"/>
        <end position="419"/>
    </location>
</feature>
<feature type="mutagenesis site" description="In gm83; defect in the coordination of locomotion. Defects in pathfinding by AVKR and AVKL interneuron axons, and PVQL and HSNL axons, and reduced FMRFamide immunoreactivity." evidence="4 5 7 8">
    <location>
        <begin position="128"/>
        <end position="419"/>
    </location>
</feature>
<gene>
    <name evidence="12" type="primary">fax-1</name>
    <name evidence="12" type="ORF">F56E3.4</name>
</gene>
<organism evidence="11">
    <name type="scientific">Caenorhabditis elegans</name>
    <dbReference type="NCBI Taxonomy" id="6239"/>
    <lineage>
        <taxon>Eukaryota</taxon>
        <taxon>Metazoa</taxon>
        <taxon>Ecdysozoa</taxon>
        <taxon>Nematoda</taxon>
        <taxon>Chromadorea</taxon>
        <taxon>Rhabditida</taxon>
        <taxon>Rhabditina</taxon>
        <taxon>Rhabditomorpha</taxon>
        <taxon>Rhabditoidea</taxon>
        <taxon>Rhabditidae</taxon>
        <taxon>Peloderinae</taxon>
        <taxon>Caenorhabditis</taxon>
    </lineage>
</organism>
<keyword id="KW-0025">Alternative splicing</keyword>
<keyword id="KW-0966">Cell projection</keyword>
<keyword id="KW-0963">Cytoplasm</keyword>
<keyword id="KW-0238">DNA-binding</keyword>
<keyword id="KW-0479">Metal-binding</keyword>
<keyword id="KW-0539">Nucleus</keyword>
<keyword id="KW-0675">Receptor</keyword>
<keyword id="KW-1185">Reference proteome</keyword>
<keyword id="KW-0804">Transcription</keyword>
<keyword id="KW-0805">Transcription regulation</keyword>
<keyword id="KW-0862">Zinc</keyword>
<keyword id="KW-0863">Zinc-finger</keyword>
<sequence>MSDEDEPLNFSTSKATEESKEGILGVRSIFNTPLLFPPPMFNAGVISPHIAAALAMSFNQQRMNASVSPPLDHTTISVNSFPSMGSVKTDSPPTASSPTLCCAVCGDVSSGKHYGILACNGCSGFFKRSVRRRLIYRCQAGTGNCVVDKAHRNQCQACRLKKCLNKGMNKDAVQNERQPRNTATIRPALDMDPQNFFREYAGAVSAIMGHSNMMKREDSPSSASDGKTEDEKKDSLQETTMSQLESVLQWAQQFRLFTVLTNSEKRQIILTQWPRLLCISLCEQAEDVSFDDHLTSLMLKFRRLDVSPAEFNCLKAITIFMKRELSLWRAGWDNRASIITVYPAGERGARLVAAALLLAEHSVMGFGNCVIPLALVFSTKSRYVIQRHAINSLPACVPGGTSAHPVLRCSMGSRREKVI</sequence>
<name>FAX1_CAEEL</name>
<accession>G5EDJ0</accession>
<accession>J7S155</accession>
<comment type="function">
    <text evidence="4 5 6 7 8">Orphan nuclear receptor that binds DNA containing an extended core motif half-site sequence 5'-ANGTCA-3' (PubMed:10648229, PubMed:18179707). Required for locomotion, neuron axon pathfinding, and regulation of expression of some peptide neurotransmitter precursors and of NMDA glutamate receptor genes (PubMed:10648229, PubMed:16183052, PubMed:22690911, PubMed:9216999). Involved in specifying interneuron identity, in concert with paired-like homeodomain unc-42 (PubMed:16183052). Plays a role in recognition of the PVPR and PVQL axons by the AVKR and HSNL growth cones (PubMed:9216999).</text>
</comment>
<comment type="subcellular location">
    <subcellularLocation>
        <location evidence="4 5">Nucleus</location>
    </subcellularLocation>
    <subcellularLocation>
        <location evidence="4">Cell projection</location>
        <location evidence="4">Axon</location>
    </subcellularLocation>
    <subcellularLocation>
        <location evidence="4">Cytoplasm</location>
    </subcellularLocation>
</comment>
<comment type="alternative products">
    <event type="alternative splicing"/>
    <isoform>
        <id>G5EDJ0-1</id>
        <name evidence="12">a</name>
        <sequence type="displayed"/>
    </isoform>
    <isoform>
        <id>G5EDJ0-2</id>
        <name evidence="13">b</name>
        <sequence type="described" ref="VSP_061076 VSP_061077"/>
    </isoform>
</comment>
<comment type="developmental stage">
    <text evidence="4 5">Expressed in embryonic and postembryonic neurons, including AVKR and AVKL interneurons (at protein level) (PubMed:10648229, PubMed:16183052). Expressed in the AVA, AVB, and AVE bilateral interneuron pairs, the RIC bilaterally-paired interneurons, SIBD and either SIBV or SMBV neuron pairs, M4 motorneuron, and the unpaired DVA interneuron (at protein level) (PubMed:16183052). Expressed dynamically in two non-neuronal cell types during larval development, paired distal tip cells (DTCs) of the hermaphrodite somatic gonad of L2 through L4 stage larvae and two pairs of vulval cells in L4 hermaphrodite larvae (at protein level) (PubMed:16183052). Expressed in the pairs of CEPD and URX sensory neurons, three pharyngeal neurons (M1, MI and probably M5), two pairs of ring interneurons (including the RIC pair), five neurons in the retrovesicular ganglion (including SABD and the pair of SABV neurons), a single neuron in the preanal ganglion and a single neuron in the dorsorectal ganglion of the tail (PubMed:10648229). Not expressed in either of the HSN or PVQ neurons, or in the PVPR neuron at any stage of development (PubMed:10648229).</text>
</comment>
<comment type="domain">
    <text evidence="7">Putative ligand binding domain (NR LBD) may be dispensable for import into nuclei and in the development of neurons that control movement.</text>
</comment>
<comment type="similarity">
    <text evidence="9">Belongs to the nuclear hormone receptor family.</text>
</comment>